<sequence length="519" mass="56826">MMRSLHSLRRMSGTVLALMLAAGLPLSAAQAQPAKPAPKGDQKPATPAPSEQFVDGIAAIVNKDVITLREVREASKLASADLQKRGIQVPDERTLQKQVLQRLIMERLERQEADRMGIRVDEAQVDQAINMIASRNKITPAAMRAEIEKSGVTWEQYRKSLRDDIRMDRLRQRAVDANIIISDAEVDAFLKDQERNPAAAQATRAPAPQQPQPQPRQPAQSGPAMLVLAQILVRVPEGSSPDQVAALRKKAEGLLARAKKGDDFASLAAANSDGPEALQGGMMGARPLDGWPDLFVKAAGSLSAGQVSGLVQSGNGFHILKVVDRAGGGQPAQAARPAPAPAPQQPSSFQEGPSVAAPQGPVRVTQTHARHILIKTSTVMTDDQARQRLEQIRERLQGGAVKFEDMARQYSQDSTAPQGGDLGWVNPGDTVPPFEAAMNALQPNEISPPVLSPFGWHLIQVLERREHDVSDEVQRMRARQLLFERRAVPAFEDWLEQLRSQAFIDNRLEKQERLEQNNR</sequence>
<dbReference type="EC" id="5.2.1.8" evidence="1"/>
<dbReference type="EMBL" id="BX640449">
    <property type="protein sequence ID" value="CAE34464.1"/>
    <property type="molecule type" value="Genomic_DNA"/>
</dbReference>
<dbReference type="RefSeq" id="WP_003814426.1">
    <property type="nucleotide sequence ID" value="NC_002927.3"/>
</dbReference>
<dbReference type="SMR" id="Q7WG19"/>
<dbReference type="KEGG" id="bbr:BB4101"/>
<dbReference type="eggNOG" id="COG0760">
    <property type="taxonomic scope" value="Bacteria"/>
</dbReference>
<dbReference type="HOGENOM" id="CLU_034646_11_0_4"/>
<dbReference type="Proteomes" id="UP000001027">
    <property type="component" value="Chromosome"/>
</dbReference>
<dbReference type="GO" id="GO:0030288">
    <property type="term" value="C:outer membrane-bounded periplasmic space"/>
    <property type="evidence" value="ECO:0007669"/>
    <property type="project" value="InterPro"/>
</dbReference>
<dbReference type="GO" id="GO:0042277">
    <property type="term" value="F:peptide binding"/>
    <property type="evidence" value="ECO:0007669"/>
    <property type="project" value="InterPro"/>
</dbReference>
<dbReference type="GO" id="GO:0003755">
    <property type="term" value="F:peptidyl-prolyl cis-trans isomerase activity"/>
    <property type="evidence" value="ECO:0007669"/>
    <property type="project" value="UniProtKB-UniRule"/>
</dbReference>
<dbReference type="GO" id="GO:0051082">
    <property type="term" value="F:unfolded protein binding"/>
    <property type="evidence" value="ECO:0007669"/>
    <property type="project" value="UniProtKB-UniRule"/>
</dbReference>
<dbReference type="GO" id="GO:0043165">
    <property type="term" value="P:Gram-negative-bacterium-type cell outer membrane assembly"/>
    <property type="evidence" value="ECO:0007669"/>
    <property type="project" value="InterPro"/>
</dbReference>
<dbReference type="GO" id="GO:0006457">
    <property type="term" value="P:protein folding"/>
    <property type="evidence" value="ECO:0007669"/>
    <property type="project" value="UniProtKB-UniRule"/>
</dbReference>
<dbReference type="GO" id="GO:0050821">
    <property type="term" value="P:protein stabilization"/>
    <property type="evidence" value="ECO:0007669"/>
    <property type="project" value="InterPro"/>
</dbReference>
<dbReference type="Gene3D" id="3.10.50.40">
    <property type="match status" value="2"/>
</dbReference>
<dbReference type="Gene3D" id="1.10.4030.10">
    <property type="entry name" value="Porin chaperone SurA, peptide-binding domain"/>
    <property type="match status" value="1"/>
</dbReference>
<dbReference type="HAMAP" id="MF_01183">
    <property type="entry name" value="Chaperone_SurA"/>
    <property type="match status" value="1"/>
</dbReference>
<dbReference type="InterPro" id="IPR050280">
    <property type="entry name" value="OMP_Chaperone_SurA"/>
</dbReference>
<dbReference type="InterPro" id="IPR046357">
    <property type="entry name" value="PPIase_dom_sf"/>
</dbReference>
<dbReference type="InterPro" id="IPR000297">
    <property type="entry name" value="PPIase_PpiC"/>
</dbReference>
<dbReference type="InterPro" id="IPR023034">
    <property type="entry name" value="PPIase_SurA"/>
</dbReference>
<dbReference type="InterPro" id="IPR015391">
    <property type="entry name" value="SurA_N"/>
</dbReference>
<dbReference type="InterPro" id="IPR027304">
    <property type="entry name" value="Trigger_fact/SurA_dom_sf"/>
</dbReference>
<dbReference type="PANTHER" id="PTHR47637">
    <property type="entry name" value="CHAPERONE SURA"/>
    <property type="match status" value="1"/>
</dbReference>
<dbReference type="PANTHER" id="PTHR47637:SF1">
    <property type="entry name" value="CHAPERONE SURA"/>
    <property type="match status" value="1"/>
</dbReference>
<dbReference type="Pfam" id="PF00639">
    <property type="entry name" value="Rotamase"/>
    <property type="match status" value="1"/>
</dbReference>
<dbReference type="Pfam" id="PF13616">
    <property type="entry name" value="Rotamase_3"/>
    <property type="match status" value="1"/>
</dbReference>
<dbReference type="Pfam" id="PF09312">
    <property type="entry name" value="SurA_N"/>
    <property type="match status" value="1"/>
</dbReference>
<dbReference type="SUPFAM" id="SSF54534">
    <property type="entry name" value="FKBP-like"/>
    <property type="match status" value="2"/>
</dbReference>
<dbReference type="SUPFAM" id="SSF109998">
    <property type="entry name" value="Triger factor/SurA peptide-binding domain-like"/>
    <property type="match status" value="1"/>
</dbReference>
<dbReference type="PROSITE" id="PS50198">
    <property type="entry name" value="PPIC_PPIASE_2"/>
    <property type="match status" value="2"/>
</dbReference>
<reference key="1">
    <citation type="journal article" date="2003" name="Nat. Genet.">
        <title>Comparative analysis of the genome sequences of Bordetella pertussis, Bordetella parapertussis and Bordetella bronchiseptica.</title>
        <authorList>
            <person name="Parkhill J."/>
            <person name="Sebaihia M."/>
            <person name="Preston A."/>
            <person name="Murphy L.D."/>
            <person name="Thomson N.R."/>
            <person name="Harris D.E."/>
            <person name="Holden M.T.G."/>
            <person name="Churcher C.M."/>
            <person name="Bentley S.D."/>
            <person name="Mungall K.L."/>
            <person name="Cerdeno-Tarraga A.-M."/>
            <person name="Temple L."/>
            <person name="James K.D."/>
            <person name="Harris B."/>
            <person name="Quail M.A."/>
            <person name="Achtman M."/>
            <person name="Atkin R."/>
            <person name="Baker S."/>
            <person name="Basham D."/>
            <person name="Bason N."/>
            <person name="Cherevach I."/>
            <person name="Chillingworth T."/>
            <person name="Collins M."/>
            <person name="Cronin A."/>
            <person name="Davis P."/>
            <person name="Doggett J."/>
            <person name="Feltwell T."/>
            <person name="Goble A."/>
            <person name="Hamlin N."/>
            <person name="Hauser H."/>
            <person name="Holroyd S."/>
            <person name="Jagels K."/>
            <person name="Leather S."/>
            <person name="Moule S."/>
            <person name="Norberczak H."/>
            <person name="O'Neil S."/>
            <person name="Ormond D."/>
            <person name="Price C."/>
            <person name="Rabbinowitsch E."/>
            <person name="Rutter S."/>
            <person name="Sanders M."/>
            <person name="Saunders D."/>
            <person name="Seeger K."/>
            <person name="Sharp S."/>
            <person name="Simmonds M."/>
            <person name="Skelton J."/>
            <person name="Squares R."/>
            <person name="Squares S."/>
            <person name="Stevens K."/>
            <person name="Unwin L."/>
            <person name="Whitehead S."/>
            <person name="Barrell B.G."/>
            <person name="Maskell D.J."/>
        </authorList>
    </citation>
    <scope>NUCLEOTIDE SEQUENCE [LARGE SCALE GENOMIC DNA]</scope>
    <source>
        <strain>ATCC BAA-588 / NCTC 13252 / RB50</strain>
    </source>
</reference>
<proteinExistence type="inferred from homology"/>
<protein>
    <recommendedName>
        <fullName evidence="1">Chaperone SurA</fullName>
    </recommendedName>
    <alternativeName>
        <fullName evidence="1">Peptidyl-prolyl cis-trans isomerase SurA</fullName>
        <shortName evidence="1">PPIase SurA</shortName>
        <ecNumber evidence="1">5.2.1.8</ecNumber>
    </alternativeName>
    <alternativeName>
        <fullName evidence="1">Rotamase SurA</fullName>
    </alternativeName>
</protein>
<keyword id="KW-0143">Chaperone</keyword>
<keyword id="KW-0413">Isomerase</keyword>
<keyword id="KW-0574">Periplasm</keyword>
<keyword id="KW-0677">Repeat</keyword>
<keyword id="KW-0697">Rotamase</keyword>
<keyword id="KW-0732">Signal</keyword>
<evidence type="ECO:0000255" key="1">
    <source>
        <dbReference type="HAMAP-Rule" id="MF_01183"/>
    </source>
</evidence>
<evidence type="ECO:0000256" key="2">
    <source>
        <dbReference type="SAM" id="MobiDB-lite"/>
    </source>
</evidence>
<feature type="signal peptide" evidence="1">
    <location>
        <begin position="1"/>
        <end position="31"/>
    </location>
</feature>
<feature type="chain" id="PRO_0000270002" description="Chaperone SurA">
    <location>
        <begin position="32"/>
        <end position="519"/>
    </location>
</feature>
<feature type="domain" description="PpiC 1" evidence="1">
    <location>
        <begin position="223"/>
        <end position="324"/>
    </location>
</feature>
<feature type="domain" description="PpiC 2" evidence="1">
    <location>
        <begin position="364"/>
        <end position="463"/>
    </location>
</feature>
<feature type="region of interest" description="Disordered" evidence="2">
    <location>
        <begin position="31"/>
        <end position="50"/>
    </location>
</feature>
<feature type="region of interest" description="Disordered" evidence="2">
    <location>
        <begin position="196"/>
        <end position="221"/>
    </location>
</feature>
<feature type="region of interest" description="Disordered" evidence="2">
    <location>
        <begin position="328"/>
        <end position="361"/>
    </location>
</feature>
<feature type="compositionally biased region" description="Low complexity" evidence="2">
    <location>
        <begin position="31"/>
        <end position="45"/>
    </location>
</feature>
<feature type="compositionally biased region" description="Low complexity" evidence="2">
    <location>
        <begin position="197"/>
        <end position="207"/>
    </location>
</feature>
<gene>
    <name evidence="1" type="primary">surA</name>
    <name type="ordered locus">BB4101</name>
</gene>
<name>SURA_BORBR</name>
<accession>Q7WG19</accession>
<comment type="function">
    <text evidence="1">Chaperone involved in the correct folding and assembly of outer membrane proteins. Recognizes specific patterns of aromatic residues and the orientation of their side chains, which are found more frequently in integral outer membrane proteins. May act in both early periplasmic and late outer membrane-associated steps of protein maturation.</text>
</comment>
<comment type="catalytic activity">
    <reaction evidence="1">
        <text>[protein]-peptidylproline (omega=180) = [protein]-peptidylproline (omega=0)</text>
        <dbReference type="Rhea" id="RHEA:16237"/>
        <dbReference type="Rhea" id="RHEA-COMP:10747"/>
        <dbReference type="Rhea" id="RHEA-COMP:10748"/>
        <dbReference type="ChEBI" id="CHEBI:83833"/>
        <dbReference type="ChEBI" id="CHEBI:83834"/>
        <dbReference type="EC" id="5.2.1.8"/>
    </reaction>
</comment>
<comment type="subcellular location">
    <subcellularLocation>
        <location evidence="1">Periplasm</location>
    </subcellularLocation>
    <text evidence="1">Is capable of associating with the outer membrane.</text>
</comment>
<comment type="domain">
    <text evidence="1">The PPIase activity resides only in the second parvulin domain. The N-terminal region and the C-terminal tail are necessary and sufficient for the chaperone activity of SurA. The PPIase activity is dispensable for SurA to function as a chaperone. The N-terminal region and the C-terminal tail are also required for porin recognition.</text>
</comment>
<organism>
    <name type="scientific">Bordetella bronchiseptica (strain ATCC BAA-588 / NCTC 13252 / RB50)</name>
    <name type="common">Alcaligenes bronchisepticus</name>
    <dbReference type="NCBI Taxonomy" id="257310"/>
    <lineage>
        <taxon>Bacteria</taxon>
        <taxon>Pseudomonadati</taxon>
        <taxon>Pseudomonadota</taxon>
        <taxon>Betaproteobacteria</taxon>
        <taxon>Burkholderiales</taxon>
        <taxon>Alcaligenaceae</taxon>
        <taxon>Bordetella</taxon>
    </lineage>
</organism>